<comment type="function">
    <text evidence="1">Mediates the hydrolysis of agmatine into N-carbamoylputrescine in the arginine decarboxylase (ADC) pathway of putrescine biosynthesis, a basic polyamine.</text>
</comment>
<comment type="catalytic activity">
    <reaction evidence="1">
        <text>agmatine + H2O = N-carbamoylputrescine + NH4(+)</text>
        <dbReference type="Rhea" id="RHEA:18037"/>
        <dbReference type="ChEBI" id="CHEBI:15377"/>
        <dbReference type="ChEBI" id="CHEBI:28938"/>
        <dbReference type="ChEBI" id="CHEBI:58145"/>
        <dbReference type="ChEBI" id="CHEBI:58318"/>
        <dbReference type="EC" id="3.5.3.12"/>
    </reaction>
</comment>
<comment type="pathway">
    <text evidence="1">Amine and polyamine biosynthesis; putrescine biosynthesis via agmatine pathway; N-carbamoylputrescine from agmatine: step 1/1.</text>
</comment>
<comment type="subunit">
    <text evidence="1">Homodimer.</text>
</comment>
<comment type="similarity">
    <text evidence="1">Belongs to the agmatine deiminase family.</text>
</comment>
<organism>
    <name type="scientific">Pseudomonas savastanoi pv. phaseolicola (strain 1448A / Race 6)</name>
    <name type="common">Pseudomonas syringae pv. phaseolicola (strain 1448A / Race 6)</name>
    <dbReference type="NCBI Taxonomy" id="264730"/>
    <lineage>
        <taxon>Bacteria</taxon>
        <taxon>Pseudomonadati</taxon>
        <taxon>Pseudomonadota</taxon>
        <taxon>Gammaproteobacteria</taxon>
        <taxon>Pseudomonadales</taxon>
        <taxon>Pseudomonadaceae</taxon>
        <taxon>Pseudomonas</taxon>
    </lineage>
</organism>
<reference key="1">
    <citation type="journal article" date="2005" name="J. Bacteriol.">
        <title>Whole-genome sequence analysis of Pseudomonas syringae pv. phaseolicola 1448A reveals divergence among pathovars in genes involved in virulence and transposition.</title>
        <authorList>
            <person name="Joardar V."/>
            <person name="Lindeberg M."/>
            <person name="Jackson R.W."/>
            <person name="Selengut J."/>
            <person name="Dodson R."/>
            <person name="Brinkac L.M."/>
            <person name="Daugherty S.C."/>
            <person name="DeBoy R.T."/>
            <person name="Durkin A.S."/>
            <person name="Gwinn Giglio M."/>
            <person name="Madupu R."/>
            <person name="Nelson W.C."/>
            <person name="Rosovitz M.J."/>
            <person name="Sullivan S.A."/>
            <person name="Crabtree J."/>
            <person name="Creasy T."/>
            <person name="Davidsen T.M."/>
            <person name="Haft D.H."/>
            <person name="Zafar N."/>
            <person name="Zhou L."/>
            <person name="Halpin R."/>
            <person name="Holley T."/>
            <person name="Khouri H.M."/>
            <person name="Feldblyum T.V."/>
            <person name="White O."/>
            <person name="Fraser C.M."/>
            <person name="Chatterjee A.K."/>
            <person name="Cartinhour S."/>
            <person name="Schneider D."/>
            <person name="Mansfield J.W."/>
            <person name="Collmer A."/>
            <person name="Buell R."/>
        </authorList>
    </citation>
    <scope>NUCLEOTIDE SEQUENCE [LARGE SCALE GENOMIC DNA]</scope>
    <source>
        <strain>1448A / Race 6</strain>
    </source>
</reference>
<feature type="chain" id="PRO_1000070559" description="Agmatine deiminase">
    <location>
        <begin position="1"/>
        <end position="368"/>
    </location>
</feature>
<feature type="active site" description="Amidino-cysteine intermediate" evidence="1">
    <location>
        <position position="357"/>
    </location>
</feature>
<protein>
    <recommendedName>
        <fullName evidence="1">Agmatine deiminase</fullName>
        <ecNumber evidence="1">3.5.3.12</ecNumber>
    </recommendedName>
    <alternativeName>
        <fullName evidence="1">Agmatine iminohydrolase</fullName>
    </alternativeName>
</protein>
<accession>Q48Q55</accession>
<keyword id="KW-0378">Hydrolase</keyword>
<keyword id="KW-0620">Polyamine biosynthesis</keyword>
<evidence type="ECO:0000255" key="1">
    <source>
        <dbReference type="HAMAP-Rule" id="MF_01841"/>
    </source>
</evidence>
<dbReference type="EC" id="3.5.3.12" evidence="1"/>
<dbReference type="EMBL" id="CP000058">
    <property type="protein sequence ID" value="AAZ33821.1"/>
    <property type="molecule type" value="Genomic_DNA"/>
</dbReference>
<dbReference type="RefSeq" id="WP_011167359.1">
    <property type="nucleotide sequence ID" value="NC_005773.3"/>
</dbReference>
<dbReference type="SMR" id="Q48Q55"/>
<dbReference type="KEGG" id="psp:PSPPH_0153"/>
<dbReference type="eggNOG" id="COG2957">
    <property type="taxonomic scope" value="Bacteria"/>
</dbReference>
<dbReference type="HOGENOM" id="CLU_037682_1_0_6"/>
<dbReference type="UniPathway" id="UPA00534">
    <property type="reaction ID" value="UER00285"/>
</dbReference>
<dbReference type="Proteomes" id="UP000000551">
    <property type="component" value="Chromosome"/>
</dbReference>
<dbReference type="GO" id="GO:0047632">
    <property type="term" value="F:agmatine deiminase activity"/>
    <property type="evidence" value="ECO:0007669"/>
    <property type="project" value="UniProtKB-UniRule"/>
</dbReference>
<dbReference type="GO" id="GO:0004668">
    <property type="term" value="F:protein-arginine deiminase activity"/>
    <property type="evidence" value="ECO:0007669"/>
    <property type="project" value="InterPro"/>
</dbReference>
<dbReference type="GO" id="GO:0033388">
    <property type="term" value="P:putrescine biosynthetic process from arginine"/>
    <property type="evidence" value="ECO:0007669"/>
    <property type="project" value="UniProtKB-UniRule"/>
</dbReference>
<dbReference type="Gene3D" id="3.75.10.10">
    <property type="entry name" value="L-arginine/glycine Amidinotransferase, Chain A"/>
    <property type="match status" value="1"/>
</dbReference>
<dbReference type="HAMAP" id="MF_01841">
    <property type="entry name" value="Agmatine_deimin"/>
    <property type="match status" value="1"/>
</dbReference>
<dbReference type="InterPro" id="IPR017754">
    <property type="entry name" value="Agmatine_deiminase"/>
</dbReference>
<dbReference type="InterPro" id="IPR007466">
    <property type="entry name" value="Peptidyl-Arg-deiminase_porph"/>
</dbReference>
<dbReference type="NCBIfam" id="TIGR03380">
    <property type="entry name" value="agmatine_aguA"/>
    <property type="match status" value="1"/>
</dbReference>
<dbReference type="NCBIfam" id="NF010070">
    <property type="entry name" value="PRK13551.1"/>
    <property type="match status" value="1"/>
</dbReference>
<dbReference type="PANTHER" id="PTHR31377">
    <property type="entry name" value="AGMATINE DEIMINASE-RELATED"/>
    <property type="match status" value="1"/>
</dbReference>
<dbReference type="PANTHER" id="PTHR31377:SF0">
    <property type="entry name" value="AGMATINE DEIMINASE-RELATED"/>
    <property type="match status" value="1"/>
</dbReference>
<dbReference type="Pfam" id="PF04371">
    <property type="entry name" value="PAD_porph"/>
    <property type="match status" value="1"/>
</dbReference>
<dbReference type="SUPFAM" id="SSF55909">
    <property type="entry name" value="Pentein"/>
    <property type="match status" value="1"/>
</dbReference>
<sequence length="368" mass="40709">MTTLNSTPRADGFHMPAEWAPQTQVWMVWPERPDNWRLGGKPAQAAHVAIAKAIARFEPVTVAVSAAQYDNARARLDVPNIRVVEMSSNDAWVRDSGPTFVINERGEVRGVNWEFNAWGGFDGGLYAPWNLDSQLGSKVLEIERCPRYVTKGFVLEGGSIHVDGEGTLITTEECLLNRNRNPHLTREQIEAILGDYLAVDKVVWLPDGLFNDETDGHVDNFCCYIRPGEVLLAWTDDPEDPNYSRCHAALGILENTLDAKGRAFIVHKMPIPGPLFATEEECAGVDQVHGSQERNPSVRLAGSYVNFLIVNGGIIAPSFDDPMDEKARELLQTLFPEHEVVMAPGRELLLGGGNIHCLTQQQPAPHKA</sequence>
<proteinExistence type="inferred from homology"/>
<gene>
    <name evidence="1" type="primary">aguA</name>
    <name type="ordered locus">PSPPH_0153</name>
</gene>
<name>AGUA_PSE14</name>